<sequence length="324" mass="35128">MAGPQDASLEEILWRSPPHVQMMGGYLHSNNILFYFAESPFFDATSNNASLAIQANYNEAFRHFVETREAFEGRLRTMQGLEFVVAYDPLQAAAQTDTQFAHEPSNVWVIRKQMRRKRAGQEDEVVVLATFFVVGDCIYMAPSVASVVGNRILSAVTSLTSLLKTASTLPIFTPAHGHTYLPPAPKPADAGQPGVPSQQSKENTPMPDAENPARVPLVGSQAGNTASTFQDTRTLAESLHLFLRYEDEYMDENPLVGEPGSFIMSKANDVDRTATAKQPQSTIPTKMGAPLVRVDTPGKGPEKVGTPSSSDESSLKKKKGGVGG</sequence>
<keyword id="KW-0010">Activator</keyword>
<keyword id="KW-0539">Nucleus</keyword>
<keyword id="KW-1185">Reference proteome</keyword>
<keyword id="KW-0804">Transcription</keyword>
<keyword id="KW-0805">Transcription regulation</keyword>
<gene>
    <name type="primary">med6</name>
    <name type="ORF">AFUA_6G04810</name>
</gene>
<organism>
    <name type="scientific">Aspergillus fumigatus (strain ATCC MYA-4609 / CBS 101355 / FGSC A1100 / Af293)</name>
    <name type="common">Neosartorya fumigata</name>
    <dbReference type="NCBI Taxonomy" id="330879"/>
    <lineage>
        <taxon>Eukaryota</taxon>
        <taxon>Fungi</taxon>
        <taxon>Dikarya</taxon>
        <taxon>Ascomycota</taxon>
        <taxon>Pezizomycotina</taxon>
        <taxon>Eurotiomycetes</taxon>
        <taxon>Eurotiomycetidae</taxon>
        <taxon>Eurotiales</taxon>
        <taxon>Aspergillaceae</taxon>
        <taxon>Aspergillus</taxon>
        <taxon>Aspergillus subgen. Fumigati</taxon>
    </lineage>
</organism>
<protein>
    <recommendedName>
        <fullName>Mediator of RNA polymerase II transcription subunit 6</fullName>
    </recommendedName>
    <alternativeName>
        <fullName>Mediator complex subunit 6</fullName>
    </alternativeName>
</protein>
<comment type="function">
    <text evidence="1">Component of the Mediator complex, a coactivator involved in the regulated transcription of nearly all RNA polymerase II-dependent genes. Mediator functions as a bridge to convey information from gene-specific regulatory proteins to the basal RNA polymerase II transcription machinery. Mediator is recruited to promoters by direct interactions with regulatory proteins and serves as a scaffold for the assembly of a functional preinitiation complex with RNA polymerase II and the general transcription factors (By similarity).</text>
</comment>
<comment type="subunit">
    <text evidence="1">Component of the Mediator complex.</text>
</comment>
<comment type="subcellular location">
    <subcellularLocation>
        <location evidence="1">Nucleus</location>
    </subcellularLocation>
</comment>
<comment type="similarity">
    <text evidence="3">Belongs to the Mediator complex subunit 6 family.</text>
</comment>
<name>MED6_ASPFU</name>
<dbReference type="EMBL" id="AAHF01000012">
    <property type="protein sequence ID" value="EAL85559.1"/>
    <property type="molecule type" value="Genomic_DNA"/>
</dbReference>
<dbReference type="RefSeq" id="XP_747597.1">
    <property type="nucleotide sequence ID" value="XM_742504.1"/>
</dbReference>
<dbReference type="SMR" id="Q4WDH9"/>
<dbReference type="FunCoup" id="Q4WDH9">
    <property type="interactions" value="785"/>
</dbReference>
<dbReference type="STRING" id="330879.Q4WDH9"/>
<dbReference type="EnsemblFungi" id="EAL85559">
    <property type="protein sequence ID" value="EAL85559"/>
    <property type="gene ID" value="AFUA_6G04810"/>
</dbReference>
<dbReference type="GeneID" id="3505209"/>
<dbReference type="KEGG" id="afm:AFUA_6G04810"/>
<dbReference type="VEuPathDB" id="FungiDB:Afu6g04810"/>
<dbReference type="eggNOG" id="KOG3169">
    <property type="taxonomic scope" value="Eukaryota"/>
</dbReference>
<dbReference type="HOGENOM" id="CLU_060172_2_0_1"/>
<dbReference type="InParanoid" id="Q4WDH9"/>
<dbReference type="OMA" id="ASHGHTY"/>
<dbReference type="OrthoDB" id="344220at2759"/>
<dbReference type="Proteomes" id="UP000002530">
    <property type="component" value="Chromosome 6"/>
</dbReference>
<dbReference type="GO" id="GO:0070847">
    <property type="term" value="C:core mediator complex"/>
    <property type="evidence" value="ECO:0000318"/>
    <property type="project" value="GO_Central"/>
</dbReference>
<dbReference type="GO" id="GO:0016592">
    <property type="term" value="C:mediator complex"/>
    <property type="evidence" value="ECO:0000318"/>
    <property type="project" value="GO_Central"/>
</dbReference>
<dbReference type="GO" id="GO:0003713">
    <property type="term" value="F:transcription coactivator activity"/>
    <property type="evidence" value="ECO:0000318"/>
    <property type="project" value="GO_Central"/>
</dbReference>
<dbReference type="GO" id="GO:0006357">
    <property type="term" value="P:regulation of transcription by RNA polymerase II"/>
    <property type="evidence" value="ECO:0000318"/>
    <property type="project" value="GO_Central"/>
</dbReference>
<dbReference type="FunFam" id="3.10.450.580:FF:000003">
    <property type="entry name" value="Mediator of RNA polymerase II transcription subunit 6"/>
    <property type="match status" value="1"/>
</dbReference>
<dbReference type="Gene3D" id="3.10.450.580">
    <property type="entry name" value="Mediator complex, subunit Med6"/>
    <property type="match status" value="1"/>
</dbReference>
<dbReference type="InterPro" id="IPR007018">
    <property type="entry name" value="Mediator_Med6"/>
</dbReference>
<dbReference type="InterPro" id="IPR016612">
    <property type="entry name" value="Mediator_Med6_fun"/>
</dbReference>
<dbReference type="InterPro" id="IPR038566">
    <property type="entry name" value="Mediator_Med6_sf"/>
</dbReference>
<dbReference type="PANTHER" id="PTHR13104">
    <property type="entry name" value="MED-6-RELATED"/>
    <property type="match status" value="1"/>
</dbReference>
<dbReference type="Pfam" id="PF04934">
    <property type="entry name" value="Med6"/>
    <property type="match status" value="1"/>
</dbReference>
<dbReference type="PIRSF" id="PIRSF013286">
    <property type="entry name" value="MED6_fungi"/>
    <property type="match status" value="1"/>
</dbReference>
<feature type="chain" id="PRO_0000303049" description="Mediator of RNA polymerase II transcription subunit 6">
    <location>
        <begin position="1"/>
        <end position="324"/>
    </location>
</feature>
<feature type="region of interest" description="Disordered" evidence="2">
    <location>
        <begin position="178"/>
        <end position="230"/>
    </location>
</feature>
<feature type="region of interest" description="Disordered" evidence="2">
    <location>
        <begin position="271"/>
        <end position="324"/>
    </location>
</feature>
<feature type="compositionally biased region" description="Polar residues" evidence="2">
    <location>
        <begin position="221"/>
        <end position="230"/>
    </location>
</feature>
<feature type="compositionally biased region" description="Polar residues" evidence="2">
    <location>
        <begin position="275"/>
        <end position="284"/>
    </location>
</feature>
<evidence type="ECO:0000250" key="1"/>
<evidence type="ECO:0000256" key="2">
    <source>
        <dbReference type="SAM" id="MobiDB-lite"/>
    </source>
</evidence>
<evidence type="ECO:0000305" key="3"/>
<proteinExistence type="inferred from homology"/>
<reference key="1">
    <citation type="journal article" date="2005" name="Nature">
        <title>Genomic sequence of the pathogenic and allergenic filamentous fungus Aspergillus fumigatus.</title>
        <authorList>
            <person name="Nierman W.C."/>
            <person name="Pain A."/>
            <person name="Anderson M.J."/>
            <person name="Wortman J.R."/>
            <person name="Kim H.S."/>
            <person name="Arroyo J."/>
            <person name="Berriman M."/>
            <person name="Abe K."/>
            <person name="Archer D.B."/>
            <person name="Bermejo C."/>
            <person name="Bennett J.W."/>
            <person name="Bowyer P."/>
            <person name="Chen D."/>
            <person name="Collins M."/>
            <person name="Coulsen R."/>
            <person name="Davies R."/>
            <person name="Dyer P.S."/>
            <person name="Farman M.L."/>
            <person name="Fedorova N."/>
            <person name="Fedorova N.D."/>
            <person name="Feldblyum T.V."/>
            <person name="Fischer R."/>
            <person name="Fosker N."/>
            <person name="Fraser A."/>
            <person name="Garcia J.L."/>
            <person name="Garcia M.J."/>
            <person name="Goble A."/>
            <person name="Goldman G.H."/>
            <person name="Gomi K."/>
            <person name="Griffith-Jones S."/>
            <person name="Gwilliam R."/>
            <person name="Haas B.J."/>
            <person name="Haas H."/>
            <person name="Harris D.E."/>
            <person name="Horiuchi H."/>
            <person name="Huang J."/>
            <person name="Humphray S."/>
            <person name="Jimenez J."/>
            <person name="Keller N."/>
            <person name="Khouri H."/>
            <person name="Kitamoto K."/>
            <person name="Kobayashi T."/>
            <person name="Konzack S."/>
            <person name="Kulkarni R."/>
            <person name="Kumagai T."/>
            <person name="Lafton A."/>
            <person name="Latge J.-P."/>
            <person name="Li W."/>
            <person name="Lord A."/>
            <person name="Lu C."/>
            <person name="Majoros W.H."/>
            <person name="May G.S."/>
            <person name="Miller B.L."/>
            <person name="Mohamoud Y."/>
            <person name="Molina M."/>
            <person name="Monod M."/>
            <person name="Mouyna I."/>
            <person name="Mulligan S."/>
            <person name="Murphy L.D."/>
            <person name="O'Neil S."/>
            <person name="Paulsen I."/>
            <person name="Penalva M.A."/>
            <person name="Pertea M."/>
            <person name="Price C."/>
            <person name="Pritchard B.L."/>
            <person name="Quail M.A."/>
            <person name="Rabbinowitsch E."/>
            <person name="Rawlins N."/>
            <person name="Rajandream M.A."/>
            <person name="Reichard U."/>
            <person name="Renauld H."/>
            <person name="Robson G.D."/>
            <person name="Rodriguez de Cordoba S."/>
            <person name="Rodriguez-Pena J.M."/>
            <person name="Ronning C.M."/>
            <person name="Rutter S."/>
            <person name="Salzberg S.L."/>
            <person name="Sanchez M."/>
            <person name="Sanchez-Ferrero J.C."/>
            <person name="Saunders D."/>
            <person name="Seeger K."/>
            <person name="Squares R."/>
            <person name="Squares S."/>
            <person name="Takeuchi M."/>
            <person name="Tekaia F."/>
            <person name="Turner G."/>
            <person name="Vazquez de Aldana C.R."/>
            <person name="Weidman J."/>
            <person name="White O."/>
            <person name="Woodward J.R."/>
            <person name="Yu J.-H."/>
            <person name="Fraser C.M."/>
            <person name="Galagan J.E."/>
            <person name="Asai K."/>
            <person name="Machida M."/>
            <person name="Hall N."/>
            <person name="Barrell B.G."/>
            <person name="Denning D.W."/>
        </authorList>
    </citation>
    <scope>NUCLEOTIDE SEQUENCE [LARGE SCALE GENOMIC DNA]</scope>
    <source>
        <strain>ATCC MYA-4609 / CBS 101355 / FGSC A1100 / Af293</strain>
    </source>
</reference>
<accession>Q4WDH9</accession>